<feature type="chain" id="PRO_0000223065" description="Protein Ycf2">
    <location>
        <begin position="1"/>
        <end position="2259"/>
    </location>
</feature>
<feature type="binding site" evidence="1">
    <location>
        <begin position="1556"/>
        <end position="1563"/>
    </location>
    <ligand>
        <name>ATP</name>
        <dbReference type="ChEBI" id="CHEBI:30616"/>
    </ligand>
</feature>
<protein>
    <recommendedName>
        <fullName evidence="1">Protein Ycf2</fullName>
    </recommendedName>
</protein>
<name>YCF2_PHYPA</name>
<proteinExistence type="inferred from homology"/>
<dbReference type="EMBL" id="AP005672">
    <property type="protein sequence ID" value="BAC85058.1"/>
    <property type="molecule type" value="Genomic_DNA"/>
</dbReference>
<dbReference type="RefSeq" id="NP_904208.1">
    <property type="nucleotide sequence ID" value="NC_005087.2"/>
</dbReference>
<dbReference type="FunCoup" id="P61243">
    <property type="interactions" value="6"/>
</dbReference>
<dbReference type="STRING" id="3218.P61243"/>
<dbReference type="GeneID" id="2546739"/>
<dbReference type="KEGG" id="ppp:2546739"/>
<dbReference type="InParanoid" id="P61243"/>
<dbReference type="OrthoDB" id="1909036at2759"/>
<dbReference type="Proteomes" id="UP000006727">
    <property type="component" value="Chloroplast"/>
</dbReference>
<dbReference type="GO" id="GO:0009570">
    <property type="term" value="C:chloroplast stroma"/>
    <property type="evidence" value="ECO:0007669"/>
    <property type="project" value="UniProtKB-SubCell"/>
</dbReference>
<dbReference type="GO" id="GO:0005524">
    <property type="term" value="F:ATP binding"/>
    <property type="evidence" value="ECO:0007669"/>
    <property type="project" value="UniProtKB-KW"/>
</dbReference>
<dbReference type="GO" id="GO:0016887">
    <property type="term" value="F:ATP hydrolysis activity"/>
    <property type="evidence" value="ECO:0007669"/>
    <property type="project" value="InterPro"/>
</dbReference>
<dbReference type="CDD" id="cd19505">
    <property type="entry name" value="RecA-like_Ycf2"/>
    <property type="match status" value="1"/>
</dbReference>
<dbReference type="Gene3D" id="1.10.8.60">
    <property type="match status" value="1"/>
</dbReference>
<dbReference type="Gene3D" id="3.40.50.300">
    <property type="entry name" value="P-loop containing nucleotide triphosphate hydrolases"/>
    <property type="match status" value="1"/>
</dbReference>
<dbReference type="HAMAP" id="MF_01330">
    <property type="entry name" value="Ycf2"/>
    <property type="match status" value="1"/>
</dbReference>
<dbReference type="InterPro" id="IPR003593">
    <property type="entry name" value="AAA+_ATPase"/>
</dbReference>
<dbReference type="InterPro" id="IPR003959">
    <property type="entry name" value="ATPase_AAA_core"/>
</dbReference>
<dbReference type="InterPro" id="IPR027417">
    <property type="entry name" value="P-loop_NTPase"/>
</dbReference>
<dbReference type="InterPro" id="IPR008543">
    <property type="entry name" value="Uncharacterised_Ycf2"/>
</dbReference>
<dbReference type="PANTHER" id="PTHR33078:SF100">
    <property type="entry name" value="PROTEIN YCF2"/>
    <property type="match status" value="1"/>
</dbReference>
<dbReference type="PANTHER" id="PTHR33078">
    <property type="entry name" value="PROTEIN YCF2-RELATED"/>
    <property type="match status" value="1"/>
</dbReference>
<dbReference type="Pfam" id="PF00004">
    <property type="entry name" value="AAA"/>
    <property type="match status" value="1"/>
</dbReference>
<dbReference type="SMART" id="SM00382">
    <property type="entry name" value="AAA"/>
    <property type="match status" value="1"/>
</dbReference>
<dbReference type="SUPFAM" id="SSF52540">
    <property type="entry name" value="P-loop containing nucleoside triphosphate hydrolases"/>
    <property type="match status" value="1"/>
</dbReference>
<evidence type="ECO:0000255" key="1">
    <source>
        <dbReference type="HAMAP-Rule" id="MF_01330"/>
    </source>
</evidence>
<keyword id="KW-0067">ATP-binding</keyword>
<keyword id="KW-0150">Chloroplast</keyword>
<keyword id="KW-0547">Nucleotide-binding</keyword>
<keyword id="KW-0934">Plastid</keyword>
<keyword id="KW-1185">Reference proteome</keyword>
<organism>
    <name type="scientific">Physcomitrium patens</name>
    <name type="common">Spreading-leaved earth moss</name>
    <name type="synonym">Physcomitrella patens</name>
    <dbReference type="NCBI Taxonomy" id="3218"/>
    <lineage>
        <taxon>Eukaryota</taxon>
        <taxon>Viridiplantae</taxon>
        <taxon>Streptophyta</taxon>
        <taxon>Embryophyta</taxon>
        <taxon>Bryophyta</taxon>
        <taxon>Bryophytina</taxon>
        <taxon>Bryopsida</taxon>
        <taxon>Funariidae</taxon>
        <taxon>Funariales</taxon>
        <taxon>Funariaceae</taxon>
        <taxon>Physcomitrium</taxon>
    </lineage>
</organism>
<sequence length="2259" mass="272128">MKQELSKNKYLYKRLKLEEIQNPRYFFEVWSESNLVKFLIRIFFNKENFIKLFDFRIISSLILQDLHSSKSNKSSILKTFLLLTLSVFLYHLNNKAIIEKKHLNLVKIVYGHINYSKYKEKNLKENFNKKNISTFTNHSLSKILSLKKKKKYSIIKTNLKKRIHAISTYNQNLVGDSEWWKLCIIEQILPSWKISSSSIKKVEILLKEKTTDDLKHFFEFYIDNILCQNYNWETKFNFIFCKTIKNNKKLNLSTDNKILTNSLIFQIFSAFCEKLLFEIENPLNLNQLNSTIKLKNNQLFFSFSKSYQKKNSVELLYLLKKNVSQNFKFWGENDSLIVKSYIFIKKKGWFFFNNYAEFYIWQLYKNSLVQYEDDLDNFNENKSNLKLFKLNFLQNKKKNLKINSDLSEISYQITKYILYKVKNSNKAINNYKIIDKNFKFGNKKKTEIKKTLNLVETNFFISNKNFFKWILYKKNLNNKNVKQNIDSTIWDLCFFFKNENNKIKSNFFLSPFFKKYLLYWIKNLFREEEKYITNPNFFENKKNLNFSNNSFSNSLFIDELNMAFSLTKKYRKNFEIIKQQKNKFFRNRKKSDIHRLIRLCKIKKTYQKLNSFIFSDYFYKIIYKKKYDINNLNLSTNLKLYTNHFYLLKSLINNHFNIEKYNKFLLFQIKYFVNLIISLDQINLLIIKQNLLFSKKINNDIHYQTNENFKLKKKLLVNKIIYKKTKIYLKYDLKKKFQSYNFVTNSFIKNRISYKYIYNNYYKNLTESLNHLLLIFSSDKKINLKNITKNIIDQKIVNWKKKGKSYFSYKIIKKNIFNYWKYNKYKLIDKKNKNKNTFKFFIKKQRNLIVLSNKTKFIDNKNSIIKWSKKLNKKNTYIFYKTFLVIFYENFNNISKLLLYYSKIFNIQNNFLKKKLNETNLVQQIKFNIYYKLKIHFYFDKILTTKFLINYFNNNQIYLESFNNNIFSLILQNQKSYFNSIQMSDKILLNSQFCKADTSKLVSFLYYSDLNYKKKLNFYLKKKKSNLSYLELIKIFSIKKKKTLSTNELTFFSKILNENSNIELKIYKTFLFEKLEQFNNENLLFIHNFNLNKLANSFVSFNPIFSTKKYLEKNISLQKSLKKNNDFYPIDSSENYLLSEFFIKIQNENTRIINKINKLFIINSNSEKFLINNILKKNTNNKKFNSETNKKRILSFSKNSIKLIPQTERFKIFKNSSFSLKLSSLFEKYIPWFFTFKWWKYFQNLFLNLYLEISLNISDQFYYILPTILQNRKKNLDYLVENLFFNLKNKFFGNSFGIWNSRLLKQINKQHKSKENQLPWFSLNLVNKWNRHYVVTISLVIFSYFILQKYFSILLGSDYLELWADFKIIQYLVDSSRGIYLDNLLHNNSIKFIKSENLLIHFFKNSKHYIKNIKFYLFTKKKINKLLIKNKGIDLSRRERKLLVQSLITDKSIDRYRPNFIYNTNSTNFQFGNQIIKQQKIKNYLENLTEDYQKNLINYPSHQFYLAENLVFLSSWQKATSLNTLWQINTLKSTFYKKPIPLELRLFSSKGILLIGSQETGRSYLVKNLAANSFIPLIKISINKLLYNKPDILTESWINILMESLRRLNLILELAEKLSPCIIWMPNIHELNVNRSTQNVESDPTFLLGIFLKYFQTGFSKKNTNNIIIIGSTHLPKKVDPALISPNRLDRLINIRTFNILQRQKKISILLYSKYSKYFYSKKKKSSLNEFGSRTIGYNARDLAGLINEILLISINQNQSTIQKKTIRLAFHRQTLGSTYINNKINFTKNYGILFYKIGKAIVQNLFIKNSSKNPLYFGNDLWKKNFYYLSKWYLEPSIFESTIKEFTILPHILGCLAGLAARDSWFILKNKPDNLISLDKYAENDFYLACGILESLLRDFSWLEIFEEKNINKKNFFNFQFQTKNPLHMVKKGLYQLTSNIVWAPKISRLNFIRTNLFNWINRPNEFEITSNLKKADKKNITGSSDNSHSFEIIQHKIKEQLPYERILSRIRRRNVQELESQLEDILLEEQFVILGFSRLFTEYRMESQLSNKPLIFIGGRFLWDPTGLLYQNHNFIFSRQDLSIDGEMLRRLYVTYGARREREKSRSSQKIKQFFLRRGYGRDSINNFSINWWNQLPFIEKNNIETFKRIEGIGVQLKRPQVFTPVYLYQRWLIENPQKILTRFELLNNQQKWLKTNKLLLNDSLIYNTLLEIYQYLLQFFILHQVLLNEMTNVLLKNKWLFQNEIEDFMNIINKNN</sequence>
<accession>P61243</accession>
<comment type="function">
    <text>Probable ATPase of unknown function. Its presence in a non-photosynthetic plant (Epifagus virginiana) and experiments in tobacco indicate that it has an essential function which is probably not related to photosynthesis.</text>
</comment>
<comment type="subcellular location">
    <subcellularLocation>
        <location evidence="1">Plastid</location>
        <location evidence="1">Chloroplast stroma</location>
    </subcellularLocation>
</comment>
<comment type="similarity">
    <text evidence="1">Belongs to the Ycf2 family.</text>
</comment>
<gene>
    <name evidence="1" type="primary">ycf2</name>
</gene>
<geneLocation type="chloroplast"/>
<reference key="1">
    <citation type="journal article" date="2003" name="Nucleic Acids Res.">
        <title>Complete chloroplast DNA sequence of the moss Physcomitrella patens: evidence for the loss and relocation of rpoA from the chloroplast to the nucleus.</title>
        <authorList>
            <person name="Sugiura C."/>
            <person name="Kobayashi Y."/>
            <person name="Setsuyuki A."/>
            <person name="Sugita C."/>
            <person name="Sugita M."/>
        </authorList>
    </citation>
    <scope>NUCLEOTIDE SEQUENCE [LARGE SCALE GENOMIC DNA]</scope>
    <source>
        <strain>cv. Gransden 2004</strain>
    </source>
</reference>